<feature type="transit peptide" description="Mitochondrion" evidence="2">
    <location>
        <begin position="1"/>
        <end position="57"/>
    </location>
</feature>
<feature type="chain" id="PRO_0000416855" description="Gamma aminobutyrate transaminase 1, mitochondrial">
    <location>
        <begin position="58"/>
        <end position="515"/>
    </location>
</feature>
<feature type="binding site" evidence="1">
    <location>
        <begin position="172"/>
        <end position="173"/>
    </location>
    <ligand>
        <name>pyridoxal 5'-phosphate</name>
        <dbReference type="ChEBI" id="CHEBI:597326"/>
    </ligand>
</feature>
<feature type="binding site" evidence="1">
    <location>
        <position position="205"/>
    </location>
    <ligand>
        <name>substrate</name>
    </ligand>
</feature>
<feature type="binding site" evidence="1">
    <location>
        <position position="312"/>
    </location>
    <ligand>
        <name>pyridoxal 5'-phosphate</name>
        <dbReference type="ChEBI" id="CHEBI:597326"/>
    </ligand>
</feature>
<feature type="binding site" evidence="1">
    <location>
        <position position="341"/>
    </location>
    <ligand>
        <name>substrate</name>
    </ligand>
</feature>
<feature type="modified residue" description="N6-(pyridoxal phosphate)lysine" evidence="1">
    <location>
        <position position="341"/>
    </location>
</feature>
<keyword id="KW-0032">Aminotransferase</keyword>
<keyword id="KW-0496">Mitochondrion</keyword>
<keyword id="KW-0663">Pyridoxal phosphate</keyword>
<keyword id="KW-1185">Reference proteome</keyword>
<keyword id="KW-0808">Transferase</keyword>
<keyword id="KW-0809">Transit peptide</keyword>
<protein>
    <recommendedName>
        <fullName>Gamma aminobutyrate transaminase 1, mitochondrial</fullName>
    </recommendedName>
    <alternativeName>
        <fullName>Gamma-aminobutyrate transaminase isozyme 1</fullName>
        <shortName>LeGABA-TP1</shortName>
        <shortName>SlGABA-T1</shortName>
        <ecNumber>2.6.1.96</ecNumber>
    </alternativeName>
</protein>
<evidence type="ECO:0000250" key="1"/>
<evidence type="ECO:0000255" key="2"/>
<evidence type="ECO:0000269" key="3">
    <source>
    </source>
</evidence>
<evidence type="ECO:0000269" key="4">
    <source>
    </source>
</evidence>
<evidence type="ECO:0000305" key="5"/>
<proteinExistence type="evidence at protein level"/>
<dbReference type="EC" id="2.6.1.96"/>
<dbReference type="EMBL" id="AY240229">
    <property type="protein sequence ID" value="AAO92255.1"/>
    <property type="molecule type" value="mRNA"/>
</dbReference>
<dbReference type="EMBL" id="AB359916">
    <property type="protein sequence ID" value="BAG16482.1"/>
    <property type="molecule type" value="mRNA"/>
</dbReference>
<dbReference type="RefSeq" id="NP_001234336.2">
    <property type="nucleotide sequence ID" value="NM_001247407.2"/>
</dbReference>
<dbReference type="SMR" id="Q84P54"/>
<dbReference type="FunCoup" id="Q84P54">
    <property type="interactions" value="918"/>
</dbReference>
<dbReference type="STRING" id="4081.Q84P54"/>
<dbReference type="PaxDb" id="4081-Solyc07g043310.2.1"/>
<dbReference type="ProMEX" id="Q84P54"/>
<dbReference type="GeneID" id="543873"/>
<dbReference type="KEGG" id="sly:543873"/>
<dbReference type="eggNOG" id="KOG1404">
    <property type="taxonomic scope" value="Eukaryota"/>
</dbReference>
<dbReference type="InParanoid" id="Q84P54"/>
<dbReference type="OrthoDB" id="425114at2759"/>
<dbReference type="BioCyc" id="MetaCyc:MONOMER-15561"/>
<dbReference type="BRENDA" id="2.6.1.19">
    <property type="organism ID" value="3101"/>
</dbReference>
<dbReference type="BRENDA" id="2.6.1.96">
    <property type="organism ID" value="3101"/>
</dbReference>
<dbReference type="Proteomes" id="UP000004994">
    <property type="component" value="Unplaced"/>
</dbReference>
<dbReference type="ExpressionAtlas" id="Q84P54">
    <property type="expression patterns" value="baseline and differential"/>
</dbReference>
<dbReference type="GO" id="GO:0005739">
    <property type="term" value="C:mitochondrion"/>
    <property type="evidence" value="ECO:0007669"/>
    <property type="project" value="UniProtKB-SubCell"/>
</dbReference>
<dbReference type="GO" id="GO:0034387">
    <property type="term" value="F:4-aminobutyrate:pyruvate transaminase activity"/>
    <property type="evidence" value="ECO:0007669"/>
    <property type="project" value="UniProtKB-EC"/>
</dbReference>
<dbReference type="GO" id="GO:0004015">
    <property type="term" value="F:adenosylmethionine-8-amino-7-oxononanoate transaminase activity"/>
    <property type="evidence" value="ECO:0000318"/>
    <property type="project" value="GO_Central"/>
</dbReference>
<dbReference type="GO" id="GO:0030170">
    <property type="term" value="F:pyridoxal phosphate binding"/>
    <property type="evidence" value="ECO:0007669"/>
    <property type="project" value="InterPro"/>
</dbReference>
<dbReference type="GO" id="GO:0009102">
    <property type="term" value="P:biotin biosynthetic process"/>
    <property type="evidence" value="ECO:0000318"/>
    <property type="project" value="GO_Central"/>
</dbReference>
<dbReference type="GO" id="GO:0009448">
    <property type="term" value="P:gamma-aminobutyric acid metabolic process"/>
    <property type="evidence" value="ECO:0000318"/>
    <property type="project" value="GO_Central"/>
</dbReference>
<dbReference type="CDD" id="cd00610">
    <property type="entry name" value="OAT_like"/>
    <property type="match status" value="1"/>
</dbReference>
<dbReference type="FunFam" id="3.40.640.10:FF:000014">
    <property type="entry name" value="Adenosylmethionine-8-amino-7-oxononanoate aminotransferase, probable"/>
    <property type="match status" value="1"/>
</dbReference>
<dbReference type="Gene3D" id="3.90.1150.10">
    <property type="entry name" value="Aspartate Aminotransferase, domain 1"/>
    <property type="match status" value="1"/>
</dbReference>
<dbReference type="Gene3D" id="3.40.640.10">
    <property type="entry name" value="Type I PLP-dependent aspartate aminotransferase-like (Major domain)"/>
    <property type="match status" value="1"/>
</dbReference>
<dbReference type="InterPro" id="IPR005814">
    <property type="entry name" value="Aminotrans_3"/>
</dbReference>
<dbReference type="InterPro" id="IPR049704">
    <property type="entry name" value="Aminotrans_3_PPA_site"/>
</dbReference>
<dbReference type="InterPro" id="IPR015424">
    <property type="entry name" value="PyrdxlP-dep_Trfase"/>
</dbReference>
<dbReference type="InterPro" id="IPR015421">
    <property type="entry name" value="PyrdxlP-dep_Trfase_major"/>
</dbReference>
<dbReference type="InterPro" id="IPR015422">
    <property type="entry name" value="PyrdxlP-dep_Trfase_small"/>
</dbReference>
<dbReference type="NCBIfam" id="NF004767">
    <property type="entry name" value="PRK06105.1"/>
    <property type="match status" value="1"/>
</dbReference>
<dbReference type="PANTHER" id="PTHR42684">
    <property type="entry name" value="ADENOSYLMETHIONINE-8-AMINO-7-OXONONANOATE AMINOTRANSFERASE"/>
    <property type="match status" value="1"/>
</dbReference>
<dbReference type="PANTHER" id="PTHR42684:SF3">
    <property type="entry name" value="ADENOSYLMETHIONINE-8-AMINO-7-OXONONANOATE AMINOTRANSFERASE"/>
    <property type="match status" value="1"/>
</dbReference>
<dbReference type="Pfam" id="PF00202">
    <property type="entry name" value="Aminotran_3"/>
    <property type="match status" value="1"/>
</dbReference>
<dbReference type="SUPFAM" id="SSF53383">
    <property type="entry name" value="PLP-dependent transferases"/>
    <property type="match status" value="1"/>
</dbReference>
<dbReference type="PROSITE" id="PS00600">
    <property type="entry name" value="AA_TRANSFER_CLASS_3"/>
    <property type="match status" value="1"/>
</dbReference>
<comment type="function">
    <text evidence="4">Transaminase that degrades gamma-amino butyric acid (GABA) and uses pyruvate or glyoxylate as amino-group acceptor. Cannot use beta-alanine, ornithine, acetylornithine, serine, glycine, asparagine, glutamine, glutamate, valine, leucine, isoleucine, methionine, phenylalanine, histidine, lysine, arginine, aspartate, threonine, tyrosine, tryptophan, proline, or cysteine as amino donors. Acts predominantly in vegetative tissues.</text>
</comment>
<comment type="catalytic activity">
    <reaction evidence="4">
        <text>4-aminobutanoate + pyruvate = succinate semialdehyde + L-alanine</text>
        <dbReference type="Rhea" id="RHEA:32263"/>
        <dbReference type="ChEBI" id="CHEBI:15361"/>
        <dbReference type="ChEBI" id="CHEBI:57706"/>
        <dbReference type="ChEBI" id="CHEBI:57972"/>
        <dbReference type="ChEBI" id="CHEBI:59888"/>
        <dbReference type="EC" id="2.6.1.96"/>
    </reaction>
</comment>
<comment type="catalytic activity">
    <reaction evidence="4">
        <text>4-aminobutanoate + glyoxylate = succinate semialdehyde + glycine</text>
        <dbReference type="Rhea" id="RHEA:32267"/>
        <dbReference type="ChEBI" id="CHEBI:36655"/>
        <dbReference type="ChEBI" id="CHEBI:57305"/>
        <dbReference type="ChEBI" id="CHEBI:57706"/>
        <dbReference type="ChEBI" id="CHEBI:59888"/>
        <dbReference type="EC" id="2.6.1.96"/>
    </reaction>
</comment>
<comment type="subcellular location">
    <subcellularLocation>
        <location evidence="4">Mitochondrion</location>
    </subcellularLocation>
</comment>
<comment type="tissue specificity">
    <text evidence="3 4">Expressed in leaves, roots, stems, flowers and fruits.</text>
</comment>
<comment type="developmental stage">
    <text evidence="3 4">Continuous expression during the fruit development.</text>
</comment>
<comment type="similarity">
    <text evidence="5">Belongs to the class-III pyridoxal-phosphate-dependent aminotransferase family.</text>
</comment>
<reference key="1">
    <citation type="journal article" date="2008" name="Plant Cell Physiol.">
        <title>Biochemical mechanism on GABA accumulation during fruit development in tomato.</title>
        <authorList>
            <person name="Akihiro T."/>
            <person name="Koike S."/>
            <person name="Tani R."/>
            <person name="Tominaga T."/>
            <person name="Watanabe S."/>
            <person name="Iijima Y."/>
            <person name="Aoki K."/>
            <person name="Shibata D."/>
            <person name="Ashihara H."/>
            <person name="Matsukura C."/>
            <person name="Akama K."/>
            <person name="Fujimura T."/>
            <person name="Ezura H."/>
        </authorList>
    </citation>
    <scope>NUCLEOTIDE SEQUENCE [MRNA]</scope>
    <scope>TISSUE SPECIFICITY</scope>
    <scope>DEVELOPMENTAL STAGE</scope>
    <source>
        <strain>cv. MicroTom</strain>
        <tissue>Fruit</tissue>
    </source>
</reference>
<reference key="2">
    <citation type="journal article" date="2009" name="J. Exp. Bot.">
        <title>Subcellular localization and expression of multiple tomato gamma-aminobutyrate transaminases that utilize both pyruvate and glyoxylate.</title>
        <authorList>
            <person name="Clark S.M."/>
            <person name="Di Leo R."/>
            <person name="Van Cauwenberghe O.R."/>
            <person name="Mullen R.T."/>
            <person name="Shelp B.J."/>
        </authorList>
    </citation>
    <scope>NUCLEOTIDE SEQUENCE [MRNA]</scope>
    <scope>FUNCTION</scope>
    <scope>CATALYTIC ACTIVITY</scope>
    <scope>SUBCELLULAR LOCATION</scope>
    <scope>TISSUE SPECIFICITY</scope>
    <scope>DEVELOPMENTAL STAGE</scope>
    <source>
        <strain>cv. MicroTom</strain>
    </source>
</reference>
<sequence>MAKISRLFGSTVKAAITAQAGFHGKRIPAVSSLQEHIVKSTPARYNSTQACLENDISGTDNKGFKGHDMLAPFTAGWQSTDVDPLIIEKSEGSHVYDMQGRKYIDTLAGLWCTALGGNEPRLVDAATKQLNTLPFYHSFWNRTTKPSLDLAKELLDMFTAKKMAKAFFTNSGSEANDTQVKLVWYYNNALGRPNKKKFIARAKAYHGSTLISASLTGLPALHQNFDLPAPFVLHTDCPHYWRYHLPGETEEEFSTRLAKNLEDLILKEGPETIAAFIAEPVMGAGGVIPPPATYFDKIQAVVKKYDILFIADEVICAFGRLGTMFGSDMYNIKPDLVTLAKALSSAYMPIGAVLVSPEVSDVIHSQSNKLGSFSHGFTYSGHPVACAVALEAIKIYKERNMVERVNRISPKFQEGLKAFSDSPIIGEIRGLGLILATEFANNKSPNDHFPPEWGVGAYFGAQCQKNGMLVRVAGDTIMMSPPFVVTPEELDELIRIYGKALRETEKRVEELKSQK</sequence>
<gene>
    <name type="primary">GABA-TP1</name>
    <name type="synonym">GABA-T1</name>
</gene>
<name>GATP1_SOLLC</name>
<organism>
    <name type="scientific">Solanum lycopersicum</name>
    <name type="common">Tomato</name>
    <name type="synonym">Lycopersicon esculentum</name>
    <dbReference type="NCBI Taxonomy" id="4081"/>
    <lineage>
        <taxon>Eukaryota</taxon>
        <taxon>Viridiplantae</taxon>
        <taxon>Streptophyta</taxon>
        <taxon>Embryophyta</taxon>
        <taxon>Tracheophyta</taxon>
        <taxon>Spermatophyta</taxon>
        <taxon>Magnoliopsida</taxon>
        <taxon>eudicotyledons</taxon>
        <taxon>Gunneridae</taxon>
        <taxon>Pentapetalae</taxon>
        <taxon>asterids</taxon>
        <taxon>lamiids</taxon>
        <taxon>Solanales</taxon>
        <taxon>Solanaceae</taxon>
        <taxon>Solanoideae</taxon>
        <taxon>Solaneae</taxon>
        <taxon>Solanum</taxon>
        <taxon>Solanum subgen. Lycopersicon</taxon>
    </lineage>
</organism>
<accession>Q84P54</accession>